<comment type="function">
    <text evidence="2 3 5 6 7">Probable essential component of SCF (SKP1-CUL1-F-box protein) E3 ubiquitin-protein ligase complexes, which mediate the ubiquitination and subsequent proteasomal degradation of target proteins (PubMed:17626846). Regulates cell proliferation during embryonic and larval development (PubMed:11864566, PubMed:11864567). Involved in synapse elimination in early synapse development (PubMed:17626846). May negatively regulate the apoptotic activity of cep-1 in response to genotoxic stress (PubMed:18340346). Plays a role in sex determination (PubMed:18718460).</text>
</comment>
<comment type="subunit">
    <text evidence="1 2 3 4 5 7">Probable component of the SCF(sel-10) E3 ubiquitin-protein ligase complex containing F-box domain-containing protein sel-10 as the substrate recognition component (PubMed:17626846). Interacts with cul-1 (PubMed:11864566, PubMed:11864567). May interact with the F-box protein mec-15 (PubMed:11864566). Interacts with dre-1 (PubMed:17336909). Interacts with syg-1 (PubMed:17626846). Interacts with sel-10 (PubMed:18718460).</text>
</comment>
<comment type="interaction">
    <interactant intactId="EBI-323117">
        <id>G5ECU1</id>
    </interactant>
    <interactant intactId="EBI-2003707">
        <id>Q17962</id>
        <label>CELE_C14B1.3</label>
    </interactant>
    <organismsDiffer>false</organismsDiffer>
    <experiments>3</experiments>
</comment>
<comment type="interaction">
    <interactant intactId="EBI-323117">
        <id>G5ECU1</id>
    </interactant>
    <interactant intactId="EBI-314286">
        <id>Q94251</id>
        <label>dre-1</label>
    </interactant>
    <organismsDiffer>false</organismsDiffer>
    <experiments>3</experiments>
</comment>
<comment type="interaction">
    <interactant intactId="EBI-323117">
        <id>G5ECU1</id>
    </interactant>
    <interactant intactId="EBI-2003730">
        <id>G5EDX9</id>
        <label>fbxa-101</label>
    </interactant>
    <organismsDiffer>false</organismsDiffer>
    <experiments>4</experiments>
</comment>
<comment type="interaction">
    <interactant intactId="EBI-323117">
        <id>G5ECU1</id>
    </interactant>
    <interactant intactId="EBI-2412975">
        <id>O17198</id>
        <label>fbxa-164</label>
    </interactant>
    <organismsDiffer>false</organismsDiffer>
    <experiments>4</experiments>
</comment>
<comment type="interaction">
    <interactant intactId="EBI-323117">
        <id>G5ECU1</id>
    </interactant>
    <interactant intactId="EBI-329491">
        <id>O16525</id>
        <label>fbxa-196</label>
    </interactant>
    <organismsDiffer>false</organismsDiffer>
    <experiments>5</experiments>
</comment>
<comment type="interaction">
    <interactant intactId="EBI-323117">
        <id>G5ECU1</id>
    </interactant>
    <interactant intactId="EBI-2417735">
        <id>Q2YS43</id>
        <label>fog-2</label>
    </interactant>
    <organismsDiffer>false</organismsDiffer>
    <experiments>4</experiments>
</comment>
<comment type="interaction">
    <interactant intactId="EBI-323117">
        <id>G5ECU1</id>
    </interactant>
    <interactant intactId="EBI-2003744">
        <id>Q18223</id>
        <label>fsn-1</label>
    </interactant>
    <organismsDiffer>false</organismsDiffer>
    <experiments>4</experiments>
</comment>
<comment type="interaction">
    <interactant intactId="EBI-323117">
        <id>G5ECU1</id>
    </interactant>
    <interactant intactId="EBI-323098">
        <id>Q93794</id>
        <label>sel-10</label>
    </interactant>
    <organismsDiffer>false</organismsDiffer>
    <experiments>5</experiments>
</comment>
<comment type="interaction">
    <interactant intactId="EBI-323117">
        <id>G5ECU1</id>
    </interactant>
    <interactant intactId="EBI-2003766">
        <id>P91305</id>
        <label>xrep-4</label>
    </interactant>
    <organismsDiffer>false</organismsDiffer>
    <experiments>3</experiments>
</comment>
<comment type="tissue specificity">
    <text evidence="2">Ubiquitously expressed in the adult.</text>
</comment>
<comment type="disruption phenotype">
    <text evidence="2 3 5 6 7">The majority of animals are either embryonic or larval lethal. Rare surviving animals develop into uncoordinated sterile adults with hyperplasia of tissues including the uterus and the spermatheca of the somatic gonad (PubMed:18718460). RNAi-mediated knockdown results in a reduction in brood size of the injected parent and embryonic lethality of offspring between gastrulation and the two-cell phase of embryogenesis (PubMed:11864566). RNAi-mediated knockdown causes synapse clusters that are retained rather than eliminated in the secondary synapse region, anterior to the vulva during synapse development (PubMed:17626846). RNAi-mediated knockdown leads to an increase in germ cell apoptosis in response to genotoxic stress (PubMed:18340346). RNAi-mediated knockdown within 16 hours of RNAi administration results in defects in embryonic divisions including spindle mispositioning, abnormal polar bodies and ectopic furrows, and hyperplasia of the somatic gonad and hypodermis in larvae (PubMed:11864567). All embryos laid 16 hours post RNAi treatment arrest and contain almost twice the number of cells as wild-type embryos (PubMed:11864567). Zygotic RNAi-mediated knockdown results in 90% sterility (PubMed:11864567).</text>
</comment>
<comment type="similarity">
    <text evidence="8">Belongs to the SKP1 family.</text>
</comment>
<sequence length="176" mass="20032">MADQKKVSEAAKEREIKISSSDNEIFLVPRNVIRLSNTINTLLMDLGLDDEEGTNAEPIPVQNVTASILKKVISWCNHHHSDPISTEDSDNREKRTDDIGSWDVEFLKVDQGTLFELILAANYLDIKGLLDVTCKTVANMIKGKSPEEIRRTFNIKNDFTPEEEEQIRKENAWCED</sequence>
<name>SKR1_CAEEL</name>
<reference evidence="10" key="1">
    <citation type="journal article" date="1998" name="Science">
        <title>Genome sequence of the nematode C. elegans: a platform for investigating biology.</title>
        <authorList>
            <consortium name="The C. elegans sequencing consortium"/>
        </authorList>
    </citation>
    <scope>NUCLEOTIDE SEQUENCE [LARGE SCALE GENOMIC DNA]</scope>
    <source>
        <strain evidence="10">Bristol N2</strain>
    </source>
</reference>
<reference evidence="9" key="2">
    <citation type="journal article" date="2002" name="Curr. Biol.">
        <title>The Caenorhabditis elegans Skp1-related gene family: diverse functions in cell proliferation, morphogenesis, and meiosis.</title>
        <authorList>
            <person name="Nayak S."/>
            <person name="Santiago F.E."/>
            <person name="Jin H."/>
            <person name="Lin D."/>
            <person name="Schedl T."/>
            <person name="Kipreos E.T."/>
        </authorList>
    </citation>
    <scope>NUCLEOTIDE SEQUENCE [MRNA] OF 7-176</scope>
    <scope>FUNCTION</scope>
    <scope>INTERACTION WITH CUL-1</scope>
    <scope>DISRUPTION PHENOTYPE</scope>
</reference>
<reference evidence="8" key="3">
    <citation type="journal article" date="2002" name="Curr. Biol.">
        <title>Multiple Skp1-related proteins in Caenorhabditis elegans: diverse patterns of interaction with Cullins and F-box proteins.</title>
        <authorList>
            <person name="Yamanaka A."/>
            <person name="Yada M."/>
            <person name="Imaki H."/>
            <person name="Koga M."/>
            <person name="Ohshima Y."/>
            <person name="Nakayama K."/>
        </authorList>
    </citation>
    <scope>FUNCTION</scope>
    <scope>INTERACTION WITH CUL-1 AND MEC-15</scope>
    <scope>TISSUE SPECIFICITY</scope>
    <scope>DISRUPTION PHENOTYPE</scope>
</reference>
<reference evidence="8" key="4">
    <citation type="journal article" date="2007" name="Dev. Cell">
        <title>DRE-1: an evolutionarily conserved F box protein that regulates C. elegans developmental age.</title>
        <authorList>
            <person name="Fielenbach N."/>
            <person name="Guardavaccaro D."/>
            <person name="Neubert K."/>
            <person name="Chan T."/>
            <person name="Li D."/>
            <person name="Feng Q."/>
            <person name="Hutter H."/>
            <person name="Pagano M."/>
            <person name="Antebi A."/>
        </authorList>
    </citation>
    <scope>INTERACTION WITH DRE-1</scope>
</reference>
<reference evidence="8" key="5">
    <citation type="journal article" date="2007" name="Science">
        <title>Spatial regulation of an E3 ubiquitin ligase directs selective synapse elimination.</title>
        <authorList>
            <person name="Ding M."/>
            <person name="Chao D."/>
            <person name="Wang G."/>
            <person name="Shen K."/>
        </authorList>
    </citation>
    <scope>FUNCTION</scope>
    <scope>INTERACTION WITH SYG-1</scope>
    <scope>DISRUPTION PHENOTYPE</scope>
</reference>
<reference evidence="8" key="6">
    <citation type="journal article" date="2008" name="Cell Death Differ.">
        <title>The SCF FSN-1 ubiquitin ligase controls germline apoptosis through CEP-1/p53 in C. elegans.</title>
        <authorList>
            <person name="Gao M.X."/>
            <person name="Liao E.H."/>
            <person name="Yu B."/>
            <person name="Wang Y."/>
            <person name="Zhen M."/>
            <person name="Derry W.B."/>
        </authorList>
    </citation>
    <scope>FUNCTION</scope>
    <scope>DISRUPTION PHENOTYPE</scope>
</reference>
<reference evidence="8" key="7">
    <citation type="journal article" date="2008" name="Dev. Biol.">
        <title>SKR-1, a homolog of Skp1 and a member of the SCF(SEL-10) complex, regulates sex-determination and LIN-12/Notch signaling in C. elegans.</title>
        <authorList>
            <person name="Killian D.J."/>
            <person name="Harvey E."/>
            <person name="Johnson P."/>
            <person name="Otori M."/>
            <person name="Mitani S."/>
            <person name="Xue D."/>
        </authorList>
    </citation>
    <scope>FUNCTION</scope>
    <scope>INTERACTION WITH SEL-10</scope>
    <scope>DISRUPTION PHENOTYPE</scope>
    <scope>MUTAGENESIS OF MET-140</scope>
</reference>
<feature type="chain" id="PRO_0000433874" description="Skp1-related protein" evidence="8">
    <location>
        <begin position="1"/>
        <end position="176"/>
    </location>
</feature>
<feature type="mutagenesis site" description="In sm151; weak loss of function mutation, does not bind to sel-10 protein." evidence="7">
    <original>M</original>
    <variation>I</variation>
    <location>
        <position position="140"/>
    </location>
</feature>
<protein>
    <recommendedName>
        <fullName evidence="11">Skp1-related protein</fullName>
    </recommendedName>
</protein>
<accession>G5ECU1</accession>
<accession>Q8WSZ9</accession>
<dbReference type="EMBL" id="BX284601">
    <property type="protein sequence ID" value="CAB03110.1"/>
    <property type="molecule type" value="Genomic_DNA"/>
</dbReference>
<dbReference type="EMBL" id="AF440505">
    <property type="protein sequence ID" value="AAL34093.1"/>
    <property type="molecule type" value="mRNA"/>
</dbReference>
<dbReference type="PIR" id="T21573">
    <property type="entry name" value="T21573"/>
</dbReference>
<dbReference type="RefSeq" id="NP_492513.1">
    <property type="nucleotide sequence ID" value="NM_060112.8"/>
</dbReference>
<dbReference type="SMR" id="G5ECU1"/>
<dbReference type="ComplexPortal" id="CPX-958">
    <property type="entry name" value="SCF-rpm-1 ubiquitin ligase complex"/>
</dbReference>
<dbReference type="FunCoup" id="G5ECU1">
    <property type="interactions" value="3377"/>
</dbReference>
<dbReference type="IntAct" id="G5ECU1">
    <property type="interactions" value="20"/>
</dbReference>
<dbReference type="MINT" id="G5ECU1"/>
<dbReference type="STRING" id="6239.F46A9.5.4"/>
<dbReference type="PaxDb" id="6239-F46A9.5.3"/>
<dbReference type="PeptideAtlas" id="G5ECU1"/>
<dbReference type="EnsemblMetazoa" id="F46A9.5.1">
    <property type="protein sequence ID" value="F46A9.5.1"/>
    <property type="gene ID" value="WBGene00004807"/>
</dbReference>
<dbReference type="GeneID" id="172775"/>
<dbReference type="KEGG" id="cel:CELE_F46A9.5"/>
<dbReference type="UCSC" id="F46A9.5.1">
    <property type="organism name" value="c. elegans"/>
</dbReference>
<dbReference type="AGR" id="WB:WBGene00004807"/>
<dbReference type="CTD" id="172775"/>
<dbReference type="WormBase" id="F46A9.5">
    <property type="protein sequence ID" value="CE10580"/>
    <property type="gene ID" value="WBGene00004807"/>
    <property type="gene designation" value="skr-1"/>
</dbReference>
<dbReference type="eggNOG" id="KOG1724">
    <property type="taxonomic scope" value="Eukaryota"/>
</dbReference>
<dbReference type="GeneTree" id="ENSGT00390000012652"/>
<dbReference type="HOGENOM" id="CLU_059252_4_0_1"/>
<dbReference type="InParanoid" id="G5ECU1"/>
<dbReference type="OMA" id="LHIEYSC"/>
<dbReference type="OrthoDB" id="5786141at2759"/>
<dbReference type="PhylomeDB" id="G5ECU1"/>
<dbReference type="Reactome" id="R-CEL-187577">
    <property type="pathway name" value="SCF(Skp2)-mediated degradation of p27/p21"/>
</dbReference>
<dbReference type="Reactome" id="R-CEL-195253">
    <property type="pathway name" value="Degradation of beta-catenin by the destruction complex"/>
</dbReference>
<dbReference type="Reactome" id="R-CEL-2565942">
    <property type="pathway name" value="Regulation of PLK1 Activity at G2/M Transition"/>
</dbReference>
<dbReference type="Reactome" id="R-CEL-68949">
    <property type="pathway name" value="Orc1 removal from chromatin"/>
</dbReference>
<dbReference type="Reactome" id="R-CEL-69231">
    <property type="pathway name" value="Cyclin D associated events in G1"/>
</dbReference>
<dbReference type="Reactome" id="R-CEL-8854050">
    <property type="pathway name" value="FBXL7 down-regulates AURKA during mitotic entry and in early mitosis"/>
</dbReference>
<dbReference type="Reactome" id="R-CEL-8939902">
    <property type="pathway name" value="Regulation of RUNX2 expression and activity"/>
</dbReference>
<dbReference type="Reactome" id="R-CEL-8951664">
    <property type="pathway name" value="Neddylation"/>
</dbReference>
<dbReference type="Reactome" id="R-CEL-917937">
    <property type="pathway name" value="Iron uptake and transport"/>
</dbReference>
<dbReference type="Reactome" id="R-CEL-9762114">
    <property type="pathway name" value="GSK3B and BTRC:CUL1-mediated-degradation of NFE2L2"/>
</dbReference>
<dbReference type="Reactome" id="R-CEL-983168">
    <property type="pathway name" value="Antigen processing: Ubiquitination &amp; Proteasome degradation"/>
</dbReference>
<dbReference type="SignaLink" id="G5ECU1"/>
<dbReference type="PRO" id="PR:G5ECU1"/>
<dbReference type="Proteomes" id="UP000001940">
    <property type="component" value="Chromosome I"/>
</dbReference>
<dbReference type="Bgee" id="WBGene00004807">
    <property type="expression patterns" value="Expressed in pharyngeal muscle cell (C elegans) and 4 other cell types or tissues"/>
</dbReference>
<dbReference type="GO" id="GO:0005737">
    <property type="term" value="C:cytoplasm"/>
    <property type="evidence" value="ECO:0000318"/>
    <property type="project" value="GO_Central"/>
</dbReference>
<dbReference type="GO" id="GO:0005634">
    <property type="term" value="C:nucleus"/>
    <property type="evidence" value="ECO:0000318"/>
    <property type="project" value="GO_Central"/>
</dbReference>
<dbReference type="GO" id="GO:0019005">
    <property type="term" value="C:SCF ubiquitin ligase complex"/>
    <property type="evidence" value="ECO:0000314"/>
    <property type="project" value="ComplexPortal"/>
</dbReference>
<dbReference type="GO" id="GO:0097602">
    <property type="term" value="F:cullin family protein binding"/>
    <property type="evidence" value="ECO:0000318"/>
    <property type="project" value="GO_Central"/>
</dbReference>
<dbReference type="GO" id="GO:0046660">
    <property type="term" value="P:female sex differentiation"/>
    <property type="evidence" value="ECO:0000316"/>
    <property type="project" value="UniProtKB"/>
</dbReference>
<dbReference type="GO" id="GO:0010826">
    <property type="term" value="P:negative regulation of centrosome duplication"/>
    <property type="evidence" value="ECO:0000315"/>
    <property type="project" value="UniProtKB"/>
</dbReference>
<dbReference type="GO" id="GO:0043518">
    <property type="term" value="P:negative regulation of DNA damage response, signal transduction by p53 class mediator"/>
    <property type="evidence" value="ECO:0000315"/>
    <property type="project" value="UniProtKB"/>
</dbReference>
<dbReference type="GO" id="GO:0010629">
    <property type="term" value="P:negative regulation of gene expression"/>
    <property type="evidence" value="ECO:0000316"/>
    <property type="project" value="WormBase"/>
</dbReference>
<dbReference type="GO" id="GO:1902230">
    <property type="term" value="P:negative regulation of intrinsic apoptotic signaling pathway in response to DNA damage"/>
    <property type="evidence" value="ECO:0000315"/>
    <property type="project" value="UniProtKB"/>
</dbReference>
<dbReference type="GO" id="GO:0007399">
    <property type="term" value="P:nervous system development"/>
    <property type="evidence" value="ECO:0007669"/>
    <property type="project" value="UniProtKB-KW"/>
</dbReference>
<dbReference type="GO" id="GO:0043065">
    <property type="term" value="P:positive regulation of apoptotic process"/>
    <property type="evidence" value="ECO:0000315"/>
    <property type="project" value="WormBase"/>
</dbReference>
<dbReference type="GO" id="GO:0031647">
    <property type="term" value="P:regulation of protein stability"/>
    <property type="evidence" value="ECO:0000315"/>
    <property type="project" value="UniProtKB"/>
</dbReference>
<dbReference type="GO" id="GO:0090128">
    <property type="term" value="P:regulation of synapse maturation"/>
    <property type="evidence" value="ECO:0000303"/>
    <property type="project" value="ComplexPortal"/>
</dbReference>
<dbReference type="GO" id="GO:1905806">
    <property type="term" value="P:regulation of synapse pruning"/>
    <property type="evidence" value="ECO:0000314"/>
    <property type="project" value="SynGO"/>
</dbReference>
<dbReference type="GO" id="GO:0031146">
    <property type="term" value="P:SCF-dependent proteasomal ubiquitin-dependent protein catabolic process"/>
    <property type="evidence" value="ECO:0000318"/>
    <property type="project" value="GO_Central"/>
</dbReference>
<dbReference type="GO" id="GO:0006511">
    <property type="term" value="P:ubiquitin-dependent protein catabolic process"/>
    <property type="evidence" value="ECO:0000303"/>
    <property type="project" value="ComplexPortal"/>
</dbReference>
<dbReference type="CDD" id="cd18322">
    <property type="entry name" value="BTB_POZ_SKP1"/>
    <property type="match status" value="1"/>
</dbReference>
<dbReference type="FunFam" id="3.30.710.10:FF:000018">
    <property type="entry name" value="S-phase kinase-associated protein 1"/>
    <property type="match status" value="1"/>
</dbReference>
<dbReference type="Gene3D" id="3.30.710.10">
    <property type="entry name" value="Potassium Channel Kv1.1, Chain A"/>
    <property type="match status" value="1"/>
</dbReference>
<dbReference type="InterPro" id="IPR016897">
    <property type="entry name" value="SKP1"/>
</dbReference>
<dbReference type="InterPro" id="IPR001232">
    <property type="entry name" value="SKP1-like"/>
</dbReference>
<dbReference type="InterPro" id="IPR036296">
    <property type="entry name" value="SKP1-like_dim_sf"/>
</dbReference>
<dbReference type="InterPro" id="IPR011333">
    <property type="entry name" value="SKP1/BTB/POZ_sf"/>
</dbReference>
<dbReference type="InterPro" id="IPR016072">
    <property type="entry name" value="Skp1_comp_dimer"/>
</dbReference>
<dbReference type="InterPro" id="IPR016073">
    <property type="entry name" value="Skp1_comp_POZ"/>
</dbReference>
<dbReference type="PANTHER" id="PTHR11165">
    <property type="entry name" value="SKP1"/>
    <property type="match status" value="1"/>
</dbReference>
<dbReference type="Pfam" id="PF01466">
    <property type="entry name" value="Skp1"/>
    <property type="match status" value="1"/>
</dbReference>
<dbReference type="Pfam" id="PF03931">
    <property type="entry name" value="Skp1_POZ"/>
    <property type="match status" value="1"/>
</dbReference>
<dbReference type="PIRSF" id="PIRSF028729">
    <property type="entry name" value="E3_ubiquit_lig_SCF_Skp"/>
    <property type="match status" value="1"/>
</dbReference>
<dbReference type="SMART" id="SM00512">
    <property type="entry name" value="Skp1"/>
    <property type="match status" value="1"/>
</dbReference>
<dbReference type="SUPFAM" id="SSF54695">
    <property type="entry name" value="POZ domain"/>
    <property type="match status" value="1"/>
</dbReference>
<dbReference type="SUPFAM" id="SSF81382">
    <property type="entry name" value="Skp1 dimerisation domain-like"/>
    <property type="match status" value="1"/>
</dbReference>
<gene>
    <name evidence="11" type="primary">skr-1</name>
    <name evidence="11" type="ORF">F46A9.5</name>
</gene>
<proteinExistence type="evidence at protein level"/>
<organism evidence="10">
    <name type="scientific">Caenorhabditis elegans</name>
    <dbReference type="NCBI Taxonomy" id="6239"/>
    <lineage>
        <taxon>Eukaryota</taxon>
        <taxon>Metazoa</taxon>
        <taxon>Ecdysozoa</taxon>
        <taxon>Nematoda</taxon>
        <taxon>Chromadorea</taxon>
        <taxon>Rhabditida</taxon>
        <taxon>Rhabditina</taxon>
        <taxon>Rhabditomorpha</taxon>
        <taxon>Rhabditoidea</taxon>
        <taxon>Rhabditidae</taxon>
        <taxon>Peloderinae</taxon>
        <taxon>Caenorhabditis</taxon>
    </lineage>
</organism>
<evidence type="ECO:0000250" key="1">
    <source>
        <dbReference type="UniProtKB" id="P63208"/>
    </source>
</evidence>
<evidence type="ECO:0000269" key="2">
    <source>
    </source>
</evidence>
<evidence type="ECO:0000269" key="3">
    <source>
    </source>
</evidence>
<evidence type="ECO:0000269" key="4">
    <source>
    </source>
</evidence>
<evidence type="ECO:0000269" key="5">
    <source>
    </source>
</evidence>
<evidence type="ECO:0000269" key="6">
    <source>
    </source>
</evidence>
<evidence type="ECO:0000269" key="7">
    <source>
    </source>
</evidence>
<evidence type="ECO:0000305" key="8"/>
<evidence type="ECO:0000312" key="9">
    <source>
        <dbReference type="EMBL" id="AAL34093.1"/>
    </source>
</evidence>
<evidence type="ECO:0000312" key="10">
    <source>
        <dbReference type="Proteomes" id="UP000001940"/>
    </source>
</evidence>
<evidence type="ECO:0000312" key="11">
    <source>
        <dbReference type="WormBase" id="F46A9.5"/>
    </source>
</evidence>
<keyword id="KW-0217">Developmental protein</keyword>
<keyword id="KW-0524">Neurogenesis</keyword>
<keyword id="KW-1185">Reference proteome</keyword>
<keyword id="KW-0833">Ubl conjugation pathway</keyword>